<accession>B8F3E4</accession>
<evidence type="ECO:0000255" key="1">
    <source>
        <dbReference type="HAMAP-Rule" id="MF_00451"/>
    </source>
</evidence>
<reference key="1">
    <citation type="journal article" date="2009" name="J. Bacteriol.">
        <title>Complete genome sequence of Haemophilus parasuis SH0165.</title>
        <authorList>
            <person name="Yue M."/>
            <person name="Yang F."/>
            <person name="Yang J."/>
            <person name="Bei W."/>
            <person name="Cai X."/>
            <person name="Chen L."/>
            <person name="Dong J."/>
            <person name="Zhou R."/>
            <person name="Jin M."/>
            <person name="Jin Q."/>
            <person name="Chen H."/>
        </authorList>
    </citation>
    <scope>NUCLEOTIDE SEQUENCE [LARGE SCALE GENOMIC DNA]</scope>
    <source>
        <strain>SH0165</strain>
    </source>
</reference>
<feature type="chain" id="PRO_1000135258" description="Nucleoside diphosphate kinase">
    <location>
        <begin position="1"/>
        <end position="138"/>
    </location>
</feature>
<feature type="active site" description="Pros-phosphohistidine intermediate" evidence="1">
    <location>
        <position position="116"/>
    </location>
</feature>
<feature type="binding site" evidence="1">
    <location>
        <position position="10"/>
    </location>
    <ligand>
        <name>ATP</name>
        <dbReference type="ChEBI" id="CHEBI:30616"/>
    </ligand>
</feature>
<feature type="binding site" evidence="1">
    <location>
        <position position="58"/>
    </location>
    <ligand>
        <name>ATP</name>
        <dbReference type="ChEBI" id="CHEBI:30616"/>
    </ligand>
</feature>
<feature type="binding site" evidence="1">
    <location>
        <position position="86"/>
    </location>
    <ligand>
        <name>ATP</name>
        <dbReference type="ChEBI" id="CHEBI:30616"/>
    </ligand>
</feature>
<feature type="binding site" evidence="1">
    <location>
        <position position="92"/>
    </location>
    <ligand>
        <name>ATP</name>
        <dbReference type="ChEBI" id="CHEBI:30616"/>
    </ligand>
</feature>
<feature type="binding site" evidence="1">
    <location>
        <position position="103"/>
    </location>
    <ligand>
        <name>ATP</name>
        <dbReference type="ChEBI" id="CHEBI:30616"/>
    </ligand>
</feature>
<feature type="binding site" evidence="1">
    <location>
        <position position="113"/>
    </location>
    <ligand>
        <name>ATP</name>
        <dbReference type="ChEBI" id="CHEBI:30616"/>
    </ligand>
</feature>
<dbReference type="EC" id="2.7.4.6" evidence="1"/>
<dbReference type="EMBL" id="CP001321">
    <property type="protein sequence ID" value="ACL31846.1"/>
    <property type="molecule type" value="Genomic_DNA"/>
</dbReference>
<dbReference type="RefSeq" id="WP_012621579.1">
    <property type="nucleotide sequence ID" value="NC_011852.1"/>
</dbReference>
<dbReference type="SMR" id="B8F3E4"/>
<dbReference type="STRING" id="557723.HAPS_0150"/>
<dbReference type="GeneID" id="66618541"/>
<dbReference type="KEGG" id="hap:HAPS_0150"/>
<dbReference type="PATRIC" id="fig|557723.8.peg.158"/>
<dbReference type="HOGENOM" id="CLU_060216_8_1_6"/>
<dbReference type="Proteomes" id="UP000006743">
    <property type="component" value="Chromosome"/>
</dbReference>
<dbReference type="GO" id="GO:0005737">
    <property type="term" value="C:cytoplasm"/>
    <property type="evidence" value="ECO:0007669"/>
    <property type="project" value="UniProtKB-SubCell"/>
</dbReference>
<dbReference type="GO" id="GO:0005524">
    <property type="term" value="F:ATP binding"/>
    <property type="evidence" value="ECO:0007669"/>
    <property type="project" value="UniProtKB-UniRule"/>
</dbReference>
<dbReference type="GO" id="GO:0046872">
    <property type="term" value="F:metal ion binding"/>
    <property type="evidence" value="ECO:0007669"/>
    <property type="project" value="UniProtKB-KW"/>
</dbReference>
<dbReference type="GO" id="GO:0004550">
    <property type="term" value="F:nucleoside diphosphate kinase activity"/>
    <property type="evidence" value="ECO:0007669"/>
    <property type="project" value="UniProtKB-UniRule"/>
</dbReference>
<dbReference type="GO" id="GO:0006241">
    <property type="term" value="P:CTP biosynthetic process"/>
    <property type="evidence" value="ECO:0007669"/>
    <property type="project" value="UniProtKB-UniRule"/>
</dbReference>
<dbReference type="GO" id="GO:0006183">
    <property type="term" value="P:GTP biosynthetic process"/>
    <property type="evidence" value="ECO:0007669"/>
    <property type="project" value="UniProtKB-UniRule"/>
</dbReference>
<dbReference type="GO" id="GO:0006228">
    <property type="term" value="P:UTP biosynthetic process"/>
    <property type="evidence" value="ECO:0007669"/>
    <property type="project" value="UniProtKB-UniRule"/>
</dbReference>
<dbReference type="CDD" id="cd04413">
    <property type="entry name" value="NDPk_I"/>
    <property type="match status" value="1"/>
</dbReference>
<dbReference type="FunFam" id="3.30.70.141:FF:000003">
    <property type="entry name" value="Nucleoside diphosphate kinase"/>
    <property type="match status" value="1"/>
</dbReference>
<dbReference type="Gene3D" id="3.30.70.141">
    <property type="entry name" value="Nucleoside diphosphate kinase-like domain"/>
    <property type="match status" value="1"/>
</dbReference>
<dbReference type="HAMAP" id="MF_00451">
    <property type="entry name" value="NDP_kinase"/>
    <property type="match status" value="1"/>
</dbReference>
<dbReference type="InterPro" id="IPR034907">
    <property type="entry name" value="NDK-like_dom"/>
</dbReference>
<dbReference type="InterPro" id="IPR036850">
    <property type="entry name" value="NDK-like_dom_sf"/>
</dbReference>
<dbReference type="InterPro" id="IPR001564">
    <property type="entry name" value="Nucleoside_diP_kinase"/>
</dbReference>
<dbReference type="InterPro" id="IPR023005">
    <property type="entry name" value="Nucleoside_diP_kinase_AS"/>
</dbReference>
<dbReference type="NCBIfam" id="NF001908">
    <property type="entry name" value="PRK00668.1"/>
    <property type="match status" value="1"/>
</dbReference>
<dbReference type="PANTHER" id="PTHR46161">
    <property type="entry name" value="NUCLEOSIDE DIPHOSPHATE KINASE"/>
    <property type="match status" value="1"/>
</dbReference>
<dbReference type="PANTHER" id="PTHR46161:SF3">
    <property type="entry name" value="NUCLEOSIDE DIPHOSPHATE KINASE DDB_G0292928-RELATED"/>
    <property type="match status" value="1"/>
</dbReference>
<dbReference type="Pfam" id="PF00334">
    <property type="entry name" value="NDK"/>
    <property type="match status" value="1"/>
</dbReference>
<dbReference type="PRINTS" id="PR01243">
    <property type="entry name" value="NUCDPKINASE"/>
</dbReference>
<dbReference type="SMART" id="SM00562">
    <property type="entry name" value="NDK"/>
    <property type="match status" value="1"/>
</dbReference>
<dbReference type="SUPFAM" id="SSF54919">
    <property type="entry name" value="Nucleoside diphosphate kinase, NDK"/>
    <property type="match status" value="1"/>
</dbReference>
<dbReference type="PROSITE" id="PS00469">
    <property type="entry name" value="NDPK"/>
    <property type="match status" value="1"/>
</dbReference>
<dbReference type="PROSITE" id="PS51374">
    <property type="entry name" value="NDPK_LIKE"/>
    <property type="match status" value="1"/>
</dbReference>
<organism>
    <name type="scientific">Glaesserella parasuis serovar 5 (strain SH0165)</name>
    <name type="common">Haemophilus parasuis</name>
    <dbReference type="NCBI Taxonomy" id="557723"/>
    <lineage>
        <taxon>Bacteria</taxon>
        <taxon>Pseudomonadati</taxon>
        <taxon>Pseudomonadota</taxon>
        <taxon>Gammaproteobacteria</taxon>
        <taxon>Pasteurellales</taxon>
        <taxon>Pasteurellaceae</taxon>
        <taxon>Glaesserella</taxon>
    </lineage>
</organism>
<name>NDK_GLAP5</name>
<comment type="function">
    <text evidence="1">Major role in the synthesis of nucleoside triphosphates other than ATP. The ATP gamma phosphate is transferred to the NDP beta phosphate via a ping-pong mechanism, using a phosphorylated active-site intermediate.</text>
</comment>
<comment type="catalytic activity">
    <reaction evidence="1">
        <text>a 2'-deoxyribonucleoside 5'-diphosphate + ATP = a 2'-deoxyribonucleoside 5'-triphosphate + ADP</text>
        <dbReference type="Rhea" id="RHEA:44640"/>
        <dbReference type="ChEBI" id="CHEBI:30616"/>
        <dbReference type="ChEBI" id="CHEBI:61560"/>
        <dbReference type="ChEBI" id="CHEBI:73316"/>
        <dbReference type="ChEBI" id="CHEBI:456216"/>
        <dbReference type="EC" id="2.7.4.6"/>
    </reaction>
</comment>
<comment type="catalytic activity">
    <reaction evidence="1">
        <text>a ribonucleoside 5'-diphosphate + ATP = a ribonucleoside 5'-triphosphate + ADP</text>
        <dbReference type="Rhea" id="RHEA:18113"/>
        <dbReference type="ChEBI" id="CHEBI:30616"/>
        <dbReference type="ChEBI" id="CHEBI:57930"/>
        <dbReference type="ChEBI" id="CHEBI:61557"/>
        <dbReference type="ChEBI" id="CHEBI:456216"/>
        <dbReference type="EC" id="2.7.4.6"/>
    </reaction>
</comment>
<comment type="cofactor">
    <cofactor evidence="1">
        <name>Mg(2+)</name>
        <dbReference type="ChEBI" id="CHEBI:18420"/>
    </cofactor>
</comment>
<comment type="subunit">
    <text evidence="1">Homotetramer.</text>
</comment>
<comment type="subcellular location">
    <subcellularLocation>
        <location evidence="1">Cytoplasm</location>
    </subcellularLocation>
</comment>
<comment type="similarity">
    <text evidence="1">Belongs to the NDK family.</text>
</comment>
<sequence>MIQQTLAIIKPDATKRHLIGEILSYMEKNGLAIKALKMLHLTKEQTEGFYAEHQGKDFFDPLVAFMISEPIVVAVLEGENAVENYRLLMGATKPEERKLGTIRKMFGLGYRENAVHGSDSETSAKREIAYFFTPSEIV</sequence>
<protein>
    <recommendedName>
        <fullName evidence="1">Nucleoside diphosphate kinase</fullName>
        <shortName evidence="1">NDK</shortName>
        <shortName evidence="1">NDP kinase</shortName>
        <ecNumber evidence="1">2.7.4.6</ecNumber>
    </recommendedName>
    <alternativeName>
        <fullName evidence="1">Nucleoside-2-P kinase</fullName>
    </alternativeName>
</protein>
<keyword id="KW-0067">ATP-binding</keyword>
<keyword id="KW-0963">Cytoplasm</keyword>
<keyword id="KW-0418">Kinase</keyword>
<keyword id="KW-0460">Magnesium</keyword>
<keyword id="KW-0479">Metal-binding</keyword>
<keyword id="KW-0546">Nucleotide metabolism</keyword>
<keyword id="KW-0547">Nucleotide-binding</keyword>
<keyword id="KW-0597">Phosphoprotein</keyword>
<keyword id="KW-1185">Reference proteome</keyword>
<keyword id="KW-0808">Transferase</keyword>
<proteinExistence type="inferred from homology"/>
<gene>
    <name evidence="1" type="primary">ndk</name>
    <name type="ordered locus">HAPS_0150</name>
</gene>